<sequence length="70" mass="8017">MQTAYWVMVMMMVWITAPLSEGGKLNDVIRGLVPDDVTPKRILQSLISRRRFDGRALFVPSCIWKTCPYG</sequence>
<comment type="function">
    <text evidence="1">Moderately activates human somatostatin receptors (SSTR) with a preferential activation of SSTR1 and SSTR4. In vivo, does not cause behavioral changes in mice within a few minutes of intracranial injection, but causes a progressive loss of movement thereafter. Four to five hours after injection, mice recover, even with the highest dose tested. Shows antinociception and antihyperalgesia activities in two mouse models of acute pain, most probably by acting outside the central nervous system.</text>
</comment>
<comment type="subcellular location">
    <subcellularLocation>
        <location evidence="5">Secreted</location>
    </subcellularLocation>
</comment>
<comment type="tissue specificity">
    <text evidence="5">Expressed by the venom duct.</text>
</comment>
<comment type="domain">
    <text evidence="4">The cysteine framework is C-C.</text>
</comment>
<comment type="miscellaneous">
    <text evidence="1">This peptide is an evolutionarily optimized stable analog of somatostatin. In addition, it adopts nearly identical conformations as in the somatostatin drug analog Octreotide. As this drug, it contains a D-Trp at the same position, whose synthesis is a common strategy used for enhancing the metabolic stability of compounds in drug design.</text>
</comment>
<comment type="miscellaneous">
    <text evidence="1">Consomatins evolved by gene duplication of a 'Somatostatin and related peptides (SSRP)' gene expressed in the snail neuroendocrine system.</text>
</comment>
<comment type="miscellaneous">
    <text evidence="1">Negative results: does not activate any of the other 313 GPCRs tested. Shows little or no activating activity at the SSTR2, SSTR3 and SSTR5.</text>
</comment>
<comment type="similarity">
    <text evidence="4">Belongs to the conotoxin C superfamily. Consomatin family.</text>
</comment>
<accession>P0DW22</accession>
<protein>
    <recommendedName>
        <fullName evidence="3">Consomatin Mrc3</fullName>
        <shortName evidence="4">ConSST Mrc3</shortName>
    </recommendedName>
    <alternativeName>
        <fullName evidence="1">Somatostatin-related peptide</fullName>
        <shortName evidence="1">SSRP</shortName>
    </alternativeName>
</protein>
<keyword id="KW-0027">Amidation</keyword>
<keyword id="KW-0208">D-amino acid</keyword>
<keyword id="KW-1015">Disulfide bond</keyword>
<keyword id="KW-1213">G-protein coupled receptor impairing toxin</keyword>
<keyword id="KW-0379">Hydroxylation</keyword>
<keyword id="KW-0964">Secreted</keyword>
<keyword id="KW-0732">Signal</keyword>
<keyword id="KW-0800">Toxin</keyword>
<dbReference type="GO" id="GO:0005576">
    <property type="term" value="C:extracellular region"/>
    <property type="evidence" value="ECO:0007669"/>
    <property type="project" value="UniProtKB-SubCell"/>
</dbReference>
<dbReference type="GO" id="GO:0090729">
    <property type="term" value="F:toxin activity"/>
    <property type="evidence" value="ECO:0007669"/>
    <property type="project" value="UniProtKB-KW"/>
</dbReference>
<organism>
    <name type="scientific">Conus mercator</name>
    <name type="common">Trader cone</name>
    <name type="synonym">Varioconus mercator</name>
    <dbReference type="NCBI Taxonomy" id="289040"/>
    <lineage>
        <taxon>Eukaryota</taxon>
        <taxon>Metazoa</taxon>
        <taxon>Spiralia</taxon>
        <taxon>Lophotrochozoa</taxon>
        <taxon>Mollusca</taxon>
        <taxon>Gastropoda</taxon>
        <taxon>Caenogastropoda</taxon>
        <taxon>Neogastropoda</taxon>
        <taxon>Conoidea</taxon>
        <taxon>Conidae</taxon>
        <taxon>Varioconus</taxon>
    </lineage>
</organism>
<reference key="1">
    <citation type="journal article" date="2022" name="Sci. Adv.">
        <title>Somatostatin venom analogs evolved by fish-hunting cone snails: from prey capture behavior to identifying drug leads.</title>
        <authorList>
            <person name="Ramiro I.B.L."/>
            <person name="Bjoern-Yoshimoto W.E."/>
            <person name="Imperial J.S."/>
            <person name="Gajewiak J."/>
            <person name="Salcedo P.F."/>
            <person name="Watkins M."/>
            <person name="Taylor D."/>
            <person name="Resager W."/>
            <person name="Ueberheide B."/>
            <person name="Braeuner-Osborne H."/>
            <person name="Whitby F.G."/>
            <person name="Hill C.P."/>
            <person name="Martin L.F."/>
            <person name="Patwardhan A."/>
            <person name="Concepcion G.P."/>
            <person name="Olivera B.M."/>
            <person name="Safavi-Hemami H."/>
        </authorList>
    </citation>
    <scope>NUCLEOTIDE SEQUENCE [MRNA]</scope>
    <scope>PROBABLE D-AMINO ACID AT TRP-64</scope>
    <scope>PROBABLE HYDROXYLATION AT PRO-68</scope>
    <scope>PROBABLE AMIDATION AT TYR-69</scope>
    <scope>PROBABLE DISULFIDE BOND</scope>
    <source>
        <tissue>Venom duct</tissue>
    </source>
</reference>
<proteinExistence type="evidence at protein level"/>
<evidence type="ECO:0000250" key="1">
    <source>
        <dbReference type="UniProtKB" id="P0DQT5"/>
    </source>
</evidence>
<evidence type="ECO:0000255" key="2"/>
<evidence type="ECO:0000303" key="3">
    <source>
    </source>
</evidence>
<evidence type="ECO:0000305" key="4"/>
<evidence type="ECO:0000305" key="5">
    <source>
    </source>
</evidence>
<name>CSST3_CONMK</name>
<feature type="signal peptide" evidence="2">
    <location>
        <begin position="1"/>
        <end position="22"/>
    </location>
</feature>
<feature type="propeptide" id="PRO_0000456126" evidence="5">
    <location>
        <begin position="23"/>
        <end position="55"/>
    </location>
</feature>
<feature type="peptide" id="PRO_0000456127" description="Consomatin Mrc3" evidence="5">
    <location>
        <begin position="56"/>
        <end position="69"/>
    </location>
</feature>
<feature type="modified residue" description="D-tryptophan" evidence="1 5">
    <location>
        <position position="64"/>
    </location>
</feature>
<feature type="modified residue" description="4-hydroxyproline" evidence="5">
    <location>
        <position position="68"/>
    </location>
</feature>
<feature type="modified residue" description="Tyrosine amide" evidence="5">
    <location>
        <position position="69"/>
    </location>
</feature>
<feature type="disulfide bond" evidence="1 5">
    <location>
        <begin position="62"/>
        <end position="67"/>
    </location>
</feature>